<dbReference type="EC" id="3.4.21.43" evidence="8 12"/>
<dbReference type="EMBL" id="X04481">
    <property type="protein sequence ID" value="CAA28169.1"/>
    <property type="molecule type" value="mRNA"/>
</dbReference>
<dbReference type="EMBL" id="M26301">
    <property type="protein sequence ID" value="AAA35614.1"/>
    <property type="molecule type" value="mRNA"/>
</dbReference>
<dbReference type="EMBL" id="L09708">
    <property type="protein sequence ID" value="AAB97607.1"/>
    <property type="molecule type" value="Genomic_DNA"/>
</dbReference>
<dbReference type="EMBL" id="L09706">
    <property type="protein sequence ID" value="AAB97607.1"/>
    <property type="status" value="JOINED"/>
    <property type="molecule type" value="Genomic_DNA"/>
</dbReference>
<dbReference type="EMBL" id="L09707">
    <property type="protein sequence ID" value="AAB97607.1"/>
    <property type="status" value="JOINED"/>
    <property type="molecule type" value="Genomic_DNA"/>
</dbReference>
<dbReference type="EMBL" id="AF019413">
    <property type="protein sequence ID" value="AAB67975.1"/>
    <property type="molecule type" value="Genomic_DNA"/>
</dbReference>
<dbReference type="EMBL" id="AY349611">
    <property type="protein sequence ID" value="AAQ15273.1"/>
    <property type="molecule type" value="Genomic_DNA"/>
</dbReference>
<dbReference type="EMBL" id="AK298311">
    <property type="protein sequence ID" value="BAG60565.1"/>
    <property type="molecule type" value="mRNA"/>
</dbReference>
<dbReference type="EMBL" id="AK300892">
    <property type="protein sequence ID" value="BAG62532.1"/>
    <property type="molecule type" value="mRNA"/>
</dbReference>
<dbReference type="EMBL" id="AL645922">
    <property type="status" value="NOT_ANNOTATED_CDS"/>
    <property type="molecule type" value="Genomic_DNA"/>
</dbReference>
<dbReference type="EMBL" id="AL662834">
    <property type="status" value="NOT_ANNOTATED_CDS"/>
    <property type="molecule type" value="Genomic_DNA"/>
</dbReference>
<dbReference type="EMBL" id="AL662849">
    <property type="status" value="NOT_ANNOTATED_CDS"/>
    <property type="molecule type" value="Genomic_DNA"/>
</dbReference>
<dbReference type="EMBL" id="AL671762">
    <property type="status" value="NOT_ANNOTATED_CDS"/>
    <property type="molecule type" value="Genomic_DNA"/>
</dbReference>
<dbReference type="EMBL" id="AL844853">
    <property type="status" value="NOT_ANNOTATED_CDS"/>
    <property type="molecule type" value="Genomic_DNA"/>
</dbReference>
<dbReference type="EMBL" id="BX005143">
    <property type="status" value="NOT_ANNOTATED_CDS"/>
    <property type="molecule type" value="Genomic_DNA"/>
</dbReference>
<dbReference type="EMBL" id="CR388219">
    <property type="status" value="NOT_ANNOTATED_CDS"/>
    <property type="molecule type" value="Genomic_DNA"/>
</dbReference>
<dbReference type="EMBL" id="CR759782">
    <property type="status" value="NOT_ANNOTATED_CDS"/>
    <property type="molecule type" value="Genomic_DNA"/>
</dbReference>
<dbReference type="EMBL" id="CR759784">
    <property type="status" value="NOT_ANNOTATED_CDS"/>
    <property type="molecule type" value="Genomic_DNA"/>
</dbReference>
<dbReference type="EMBL" id="CR933857">
    <property type="status" value="NOT_ANNOTATED_CDS"/>
    <property type="molecule type" value="Genomic_DNA"/>
</dbReference>
<dbReference type="EMBL" id="BC043484">
    <property type="protein sequence ID" value="AAH43484.1"/>
    <property type="molecule type" value="mRNA"/>
</dbReference>
<dbReference type="EMBL" id="M15549">
    <property type="protein sequence ID" value="AAA59649.1"/>
    <property type="molecule type" value="Genomic_DNA"/>
</dbReference>
<dbReference type="EMBL" id="M15082">
    <property type="protein sequence ID" value="AAA59624.1"/>
    <property type="molecule type" value="Genomic_DNA"/>
</dbReference>
<dbReference type="CCDS" id="CCDS4728.1">
    <molecule id="P06681-1"/>
</dbReference>
<dbReference type="CCDS" id="CCDS54991.1">
    <molecule id="P06681-3"/>
</dbReference>
<dbReference type="CCDS" id="CCDS56416.1">
    <molecule id="P06681-2"/>
</dbReference>
<dbReference type="PIR" id="A25971">
    <property type="entry name" value="C2HU"/>
</dbReference>
<dbReference type="RefSeq" id="NP_000054.2">
    <molecule id="P06681-1"/>
    <property type="nucleotide sequence ID" value="NM_000063.5"/>
</dbReference>
<dbReference type="RefSeq" id="NP_001139375.1">
    <molecule id="P06681-3"/>
    <property type="nucleotide sequence ID" value="NM_001145903.3"/>
</dbReference>
<dbReference type="RefSeq" id="NP_001171534.1">
    <molecule id="P06681-2"/>
    <property type="nucleotide sequence ID" value="NM_001178063.3"/>
</dbReference>
<dbReference type="PDB" id="2I6Q">
    <property type="method" value="X-ray"/>
    <property type="resolution" value="2.10 A"/>
    <property type="chains" value="A=244-752"/>
</dbReference>
<dbReference type="PDB" id="2I6S">
    <property type="method" value="X-ray"/>
    <property type="resolution" value="2.70 A"/>
    <property type="chains" value="A=244-752"/>
</dbReference>
<dbReference type="PDB" id="2ODP">
    <property type="method" value="X-ray"/>
    <property type="resolution" value="1.90 A"/>
    <property type="chains" value="A=244-752"/>
</dbReference>
<dbReference type="PDB" id="2ODQ">
    <property type="method" value="X-ray"/>
    <property type="resolution" value="2.30 A"/>
    <property type="chains" value="A=244-752"/>
</dbReference>
<dbReference type="PDB" id="3ERB">
    <property type="method" value="X-ray"/>
    <property type="resolution" value="1.80 A"/>
    <property type="chains" value="A=21-243"/>
</dbReference>
<dbReference type="PDB" id="8ACF">
    <property type="method" value="X-ray"/>
    <property type="resolution" value="1.80 A"/>
    <property type="chains" value="A=21-217"/>
</dbReference>
<dbReference type="PDB" id="8ACI">
    <property type="method" value="X-ray"/>
    <property type="resolution" value="1.85 A"/>
    <property type="chains" value="A=21-217"/>
</dbReference>
<dbReference type="PDBsum" id="2I6Q"/>
<dbReference type="PDBsum" id="2I6S"/>
<dbReference type="PDBsum" id="2ODP"/>
<dbReference type="PDBsum" id="2ODQ"/>
<dbReference type="PDBsum" id="3ERB"/>
<dbReference type="PDBsum" id="8ACF"/>
<dbReference type="PDBsum" id="8ACI"/>
<dbReference type="SMR" id="P06681"/>
<dbReference type="BioGRID" id="107178">
    <property type="interactions" value="12"/>
</dbReference>
<dbReference type="ComplexPortal" id="CPX-5675">
    <property type="entry name" value="Classical and lectin pathway C3 convertase complex C4b2a-A"/>
</dbReference>
<dbReference type="ComplexPortal" id="CPX-6156">
    <property type="entry name" value="Classical and lectin pathway C3 convertase complex C4b2a-B"/>
</dbReference>
<dbReference type="FunCoup" id="P06681">
    <property type="interactions" value="236"/>
</dbReference>
<dbReference type="IntAct" id="P06681">
    <property type="interactions" value="13"/>
</dbReference>
<dbReference type="STRING" id="9606.ENSP00000299367"/>
<dbReference type="BindingDB" id="P06681"/>
<dbReference type="ChEMBL" id="CHEMBL4295701"/>
<dbReference type="MEROPS" id="S01.194"/>
<dbReference type="GlyConnect" id="1145">
    <property type="glycosylation" value="17 N-Linked glycans (6 sites)"/>
</dbReference>
<dbReference type="GlyCosmos" id="P06681">
    <property type="glycosylation" value="9 sites, 18 glycans"/>
</dbReference>
<dbReference type="GlyGen" id="P06681">
    <property type="glycosylation" value="12 sites, 54 N-linked glycans (8 sites)"/>
</dbReference>
<dbReference type="iPTMnet" id="P06681"/>
<dbReference type="PhosphoSitePlus" id="P06681"/>
<dbReference type="BioMuta" id="C2"/>
<dbReference type="DMDM" id="3915642"/>
<dbReference type="CPTAC" id="non-CPTAC-1104"/>
<dbReference type="jPOST" id="P06681"/>
<dbReference type="MassIVE" id="P06681"/>
<dbReference type="PaxDb" id="9606-ENSP00000299367"/>
<dbReference type="PeptideAtlas" id="P06681"/>
<dbReference type="ProteomicsDB" id="20143"/>
<dbReference type="ProteomicsDB" id="51908">
    <molecule id="P06681-1"/>
</dbReference>
<dbReference type="ProteomicsDB" id="51909">
    <molecule id="P06681-2"/>
</dbReference>
<dbReference type="Antibodypedia" id="7528">
    <property type="antibodies" value="552 antibodies from 34 providers"/>
</dbReference>
<dbReference type="DNASU" id="717"/>
<dbReference type="Ensembl" id="ENST00000299367.10">
    <molecule id="P06681-1"/>
    <property type="protein sequence ID" value="ENSP00000299367.5"/>
    <property type="gene ID" value="ENSG00000166278.16"/>
</dbReference>
<dbReference type="Ensembl" id="ENST00000375510.8">
    <molecule id="P06681-1"/>
    <property type="protein sequence ID" value="ENSP00000364660.4"/>
    <property type="gene ID" value="ENSG00000204364.10"/>
</dbReference>
<dbReference type="Ensembl" id="ENST00000383362.8">
    <molecule id="P06681-1"/>
    <property type="protein sequence ID" value="ENSP00000372853.4"/>
    <property type="gene ID" value="ENSG00000206372.11"/>
</dbReference>
<dbReference type="Ensembl" id="ENST00000411803.6">
    <molecule id="P06681-1"/>
    <property type="protein sequence ID" value="ENSP00000402278.2"/>
    <property type="gene ID" value="ENSG00000235696.8"/>
</dbReference>
<dbReference type="Ensembl" id="ENST00000413548.6">
    <molecule id="P06681-1"/>
    <property type="protein sequence ID" value="ENSP00000407961.2"/>
    <property type="gene ID" value="ENSG00000231543.9"/>
</dbReference>
<dbReference type="Ensembl" id="ENST00000416252.6">
    <molecule id="P06681-1"/>
    <property type="protein sequence ID" value="ENSP00000405800.2"/>
    <property type="gene ID" value="ENSG00000235017.9"/>
</dbReference>
<dbReference type="Ensembl" id="ENST00000442278.6">
    <molecule id="P06681-3"/>
    <property type="protein sequence ID" value="ENSP00000395683.2"/>
    <property type="gene ID" value="ENSG00000166278.16"/>
</dbReference>
<dbReference type="Ensembl" id="ENST00000448206.6">
    <molecule id="P06681-1"/>
    <property type="protein sequence ID" value="ENSP00000392835.2"/>
    <property type="gene ID" value="ENSG00000226560.10"/>
</dbReference>
<dbReference type="Ensembl" id="ENST00000452323.7">
    <molecule id="P06681-2"/>
    <property type="protein sequence ID" value="ENSP00000392322.2"/>
    <property type="gene ID" value="ENSG00000166278.16"/>
</dbReference>
<dbReference type="Ensembl" id="ENST00000548973.5">
    <molecule id="P06681-3"/>
    <property type="protein sequence ID" value="ENSP00000446728.1"/>
    <property type="gene ID" value="ENSG00000206372.11"/>
</dbReference>
<dbReference type="Ensembl" id="ENST00000548995.3">
    <molecule id="P06681-3"/>
    <property type="protein sequence ID" value="ENSP00000449286.1"/>
    <property type="gene ID" value="ENSG00000204364.10"/>
</dbReference>
<dbReference type="Ensembl" id="ENST00000549972.3">
    <molecule id="P06681-3"/>
    <property type="protein sequence ID" value="ENSP00000447632.1"/>
    <property type="gene ID" value="ENSG00000235696.8"/>
</dbReference>
<dbReference type="Ensembl" id="ENST00000550682.5">
    <molecule id="P06681-3"/>
    <property type="protein sequence ID" value="ENSP00000446639.1"/>
    <property type="gene ID" value="ENSG00000231543.9"/>
</dbReference>
<dbReference type="Ensembl" id="ENST00000551081.4">
    <molecule id="P06681-3"/>
    <property type="protein sequence ID" value="ENSP00000450387.1"/>
    <property type="gene ID" value="ENSG00000235017.9"/>
</dbReference>
<dbReference type="Ensembl" id="ENST00000551648.5">
    <molecule id="P06681-3"/>
    <property type="protein sequence ID" value="ENSP00000449715.1"/>
    <property type="gene ID" value="ENSG00000226560.10"/>
</dbReference>
<dbReference type="Ensembl" id="ENST00000612228.1">
    <molecule id="P06681-2"/>
    <property type="protein sequence ID" value="ENSP00000482616.1"/>
    <property type="gene ID" value="ENSG00000231543.9"/>
</dbReference>
<dbReference type="Ensembl" id="ENST00000615380.4">
    <molecule id="P06681-2"/>
    <property type="protein sequence ID" value="ENSP00000481651.1"/>
    <property type="gene ID" value="ENSG00000226560.10"/>
</dbReference>
<dbReference type="Ensembl" id="ENST00000618254.4">
    <molecule id="P06681-2"/>
    <property type="protein sequence ID" value="ENSP00000483231.1"/>
    <property type="gene ID" value="ENSG00000235017.9"/>
</dbReference>
<dbReference type="Ensembl" id="ENST00000621558.4">
    <molecule id="P06681-2"/>
    <property type="protein sequence ID" value="ENSP00000480739.1"/>
    <property type="gene ID" value="ENSG00000206372.11"/>
</dbReference>
<dbReference type="GeneID" id="717"/>
<dbReference type="KEGG" id="hsa:717"/>
<dbReference type="MANE-Select" id="ENST00000299367.10">
    <property type="protein sequence ID" value="ENSP00000299367.5"/>
    <property type="RefSeq nucleotide sequence ID" value="NM_000063.6"/>
    <property type="RefSeq protein sequence ID" value="NP_000054.2"/>
</dbReference>
<dbReference type="UCSC" id="uc010jtk.5">
    <molecule id="P06681-1"/>
    <property type="organism name" value="human"/>
</dbReference>
<dbReference type="AGR" id="HGNC:1248"/>
<dbReference type="CTD" id="717"/>
<dbReference type="DisGeNET" id="717"/>
<dbReference type="GeneCards" id="C2"/>
<dbReference type="HGNC" id="HGNC:1248">
    <property type="gene designation" value="C2"/>
</dbReference>
<dbReference type="HPA" id="ENSG00000166278">
    <property type="expression patterns" value="Tissue enriched (liver)"/>
</dbReference>
<dbReference type="MalaCards" id="C2"/>
<dbReference type="MIM" id="217000">
    <property type="type" value="phenotype"/>
</dbReference>
<dbReference type="MIM" id="613927">
    <property type="type" value="gene"/>
</dbReference>
<dbReference type="MIM" id="615489">
    <property type="type" value="phenotype"/>
</dbReference>
<dbReference type="neXtProt" id="NX_P06681"/>
<dbReference type="OpenTargets" id="ENSG00000166278"/>
<dbReference type="Orphanet" id="169147">
    <property type="disease" value="Immunodeficiency due to a classical component pathway complement deficiency"/>
</dbReference>
<dbReference type="PharmGKB" id="PA25637"/>
<dbReference type="VEuPathDB" id="HostDB:ENSG00000166278"/>
<dbReference type="eggNOG" id="KOG3627">
    <property type="taxonomic scope" value="Eukaryota"/>
</dbReference>
<dbReference type="GeneTree" id="ENSGT00940000162934"/>
<dbReference type="HOGENOM" id="CLU_022004_0_0_1"/>
<dbReference type="InParanoid" id="P06681"/>
<dbReference type="OMA" id="YTKPWHV"/>
<dbReference type="OrthoDB" id="6127264at2759"/>
<dbReference type="PAN-GO" id="P06681">
    <property type="GO annotations" value="3 GO annotations based on evolutionary models"/>
</dbReference>
<dbReference type="PhylomeDB" id="P06681"/>
<dbReference type="TreeFam" id="TF330194"/>
<dbReference type="PathwayCommons" id="P06681"/>
<dbReference type="Reactome" id="R-HSA-166663">
    <property type="pathway name" value="Initial triggering of complement"/>
</dbReference>
<dbReference type="Reactome" id="R-HSA-174577">
    <property type="pathway name" value="Activation of C3 and C5"/>
</dbReference>
<dbReference type="Reactome" id="R-HSA-977606">
    <property type="pathway name" value="Regulation of Complement cascade"/>
</dbReference>
<dbReference type="SABIO-RK" id="P06681"/>
<dbReference type="SignaLink" id="P06681"/>
<dbReference type="SIGNOR" id="P06681"/>
<dbReference type="BioGRID-ORCS" id="717">
    <property type="hits" value="13 hits in 1148 CRISPR screens"/>
</dbReference>
<dbReference type="ChiTaRS" id="C2">
    <property type="organism name" value="human"/>
</dbReference>
<dbReference type="EvolutionaryTrace" id="P06681"/>
<dbReference type="GeneWiki" id="Complement_component_2"/>
<dbReference type="GenomeRNAi" id="717"/>
<dbReference type="Pharos" id="P06681">
    <property type="development level" value="Tchem"/>
</dbReference>
<dbReference type="PRO" id="PR:P06681"/>
<dbReference type="Proteomes" id="UP000005640">
    <property type="component" value="Chromosome 6"/>
</dbReference>
<dbReference type="RNAct" id="P06681">
    <property type="molecule type" value="protein"/>
</dbReference>
<dbReference type="Bgee" id="ENSG00000166278">
    <property type="expression patterns" value="Expressed in liver and 99 other cell types or tissues"/>
</dbReference>
<dbReference type="ExpressionAtlas" id="P06681">
    <property type="expression patterns" value="baseline and differential"/>
</dbReference>
<dbReference type="GO" id="GO:0070062">
    <property type="term" value="C:extracellular exosome"/>
    <property type="evidence" value="ECO:0007005"/>
    <property type="project" value="UniProtKB"/>
</dbReference>
<dbReference type="GO" id="GO:0005576">
    <property type="term" value="C:extracellular region"/>
    <property type="evidence" value="ECO:0000304"/>
    <property type="project" value="Reactome"/>
</dbReference>
<dbReference type="GO" id="GO:0005615">
    <property type="term" value="C:extracellular space"/>
    <property type="evidence" value="ECO:0000304"/>
    <property type="project" value="ProtInc"/>
</dbReference>
<dbReference type="GO" id="GO:0046872">
    <property type="term" value="F:metal ion binding"/>
    <property type="evidence" value="ECO:0007669"/>
    <property type="project" value="UniProtKB-KW"/>
</dbReference>
<dbReference type="GO" id="GO:0004252">
    <property type="term" value="F:serine-type endopeptidase activity"/>
    <property type="evidence" value="ECO:0007669"/>
    <property type="project" value="UniProtKB-EC"/>
</dbReference>
<dbReference type="GO" id="GO:0006956">
    <property type="term" value="P:complement activation"/>
    <property type="evidence" value="ECO:0000315"/>
    <property type="project" value="BHF-UCL"/>
</dbReference>
<dbReference type="GO" id="GO:0006958">
    <property type="term" value="P:complement activation, classical pathway"/>
    <property type="evidence" value="ECO:0000304"/>
    <property type="project" value="ProtInc"/>
</dbReference>
<dbReference type="GO" id="GO:0045087">
    <property type="term" value="P:innate immune response"/>
    <property type="evidence" value="ECO:0007669"/>
    <property type="project" value="UniProtKB-KW"/>
</dbReference>
<dbReference type="GO" id="GO:2000427">
    <property type="term" value="P:positive regulation of apoptotic cell clearance"/>
    <property type="evidence" value="ECO:0000315"/>
    <property type="project" value="BHF-UCL"/>
</dbReference>
<dbReference type="GO" id="GO:0006508">
    <property type="term" value="P:proteolysis"/>
    <property type="evidence" value="ECO:0007669"/>
    <property type="project" value="UniProtKB-KW"/>
</dbReference>
<dbReference type="GO" id="GO:0009617">
    <property type="term" value="P:response to bacterium"/>
    <property type="evidence" value="ECO:0000318"/>
    <property type="project" value="GO_Central"/>
</dbReference>
<dbReference type="GO" id="GO:0032496">
    <property type="term" value="P:response to lipopolysaccharide"/>
    <property type="evidence" value="ECO:0007669"/>
    <property type="project" value="Ensembl"/>
</dbReference>
<dbReference type="GO" id="GO:0007584">
    <property type="term" value="P:response to nutrient"/>
    <property type="evidence" value="ECO:0007669"/>
    <property type="project" value="Ensembl"/>
</dbReference>
<dbReference type="GO" id="GO:0097066">
    <property type="term" value="P:response to thyroid hormone"/>
    <property type="evidence" value="ECO:0007669"/>
    <property type="project" value="Ensembl"/>
</dbReference>
<dbReference type="CDD" id="cd00033">
    <property type="entry name" value="CCP"/>
    <property type="match status" value="2"/>
</dbReference>
<dbReference type="CDD" id="cd00190">
    <property type="entry name" value="Tryp_SPc"/>
    <property type="match status" value="1"/>
</dbReference>
<dbReference type="CDD" id="cd01470">
    <property type="entry name" value="vWA_complement_factors"/>
    <property type="match status" value="1"/>
</dbReference>
<dbReference type="FunFam" id="3.40.50.410:FF:000065">
    <property type="entry name" value="Complement C2"/>
    <property type="match status" value="1"/>
</dbReference>
<dbReference type="FunFam" id="2.40.10.10:FF:000051">
    <property type="entry name" value="complement C2 isoform X1"/>
    <property type="match status" value="1"/>
</dbReference>
<dbReference type="FunFam" id="2.10.70.10:FF:000052">
    <property type="entry name" value="Complement factor B"/>
    <property type="match status" value="1"/>
</dbReference>
<dbReference type="FunFam" id="2.10.70.10:FF:000019">
    <property type="entry name" value="Complement factor b,-like"/>
    <property type="match status" value="2"/>
</dbReference>
<dbReference type="FunFam" id="2.40.10.10:FF:000046">
    <property type="entry name" value="Complement factor b,-like"/>
    <property type="match status" value="1"/>
</dbReference>
<dbReference type="Gene3D" id="2.10.70.10">
    <property type="entry name" value="Complement Module, domain 1"/>
    <property type="match status" value="3"/>
</dbReference>
<dbReference type="Gene3D" id="2.40.10.10">
    <property type="entry name" value="Trypsin-like serine proteases"/>
    <property type="match status" value="2"/>
</dbReference>
<dbReference type="Gene3D" id="3.40.50.410">
    <property type="entry name" value="von Willebrand factor, type A domain"/>
    <property type="match status" value="1"/>
</dbReference>
<dbReference type="InterPro" id="IPR011360">
    <property type="entry name" value="Compl_C2_B"/>
</dbReference>
<dbReference type="InterPro" id="IPR009003">
    <property type="entry name" value="Peptidase_S1_PA"/>
</dbReference>
<dbReference type="InterPro" id="IPR043504">
    <property type="entry name" value="Peptidase_S1_PA_chymotrypsin"/>
</dbReference>
<dbReference type="InterPro" id="IPR001314">
    <property type="entry name" value="Peptidase_S1A"/>
</dbReference>
<dbReference type="InterPro" id="IPR035976">
    <property type="entry name" value="Sushi/SCR/CCP_sf"/>
</dbReference>
<dbReference type="InterPro" id="IPR000436">
    <property type="entry name" value="Sushi_SCR_CCP_dom"/>
</dbReference>
<dbReference type="InterPro" id="IPR001254">
    <property type="entry name" value="Trypsin_dom"/>
</dbReference>
<dbReference type="InterPro" id="IPR018114">
    <property type="entry name" value="TRYPSIN_HIS"/>
</dbReference>
<dbReference type="InterPro" id="IPR033116">
    <property type="entry name" value="TRYPSIN_SER"/>
</dbReference>
<dbReference type="InterPro" id="IPR002035">
    <property type="entry name" value="VWF_A"/>
</dbReference>
<dbReference type="InterPro" id="IPR036465">
    <property type="entry name" value="vWFA_dom_sf"/>
</dbReference>
<dbReference type="PANTHER" id="PTHR46393:SF2">
    <property type="entry name" value="COMPLEMENT C2"/>
    <property type="match status" value="1"/>
</dbReference>
<dbReference type="PANTHER" id="PTHR46393">
    <property type="entry name" value="SUSHI DOMAIN-CONTAINING PROTEIN"/>
    <property type="match status" value="1"/>
</dbReference>
<dbReference type="Pfam" id="PF00084">
    <property type="entry name" value="Sushi"/>
    <property type="match status" value="2"/>
</dbReference>
<dbReference type="Pfam" id="PF00089">
    <property type="entry name" value="Trypsin"/>
    <property type="match status" value="1"/>
</dbReference>
<dbReference type="Pfam" id="PF00092">
    <property type="entry name" value="VWA"/>
    <property type="match status" value="1"/>
</dbReference>
<dbReference type="PIRSF" id="PIRSF001154">
    <property type="entry name" value="Compl_C2_B"/>
    <property type="match status" value="1"/>
</dbReference>
<dbReference type="PRINTS" id="PR00722">
    <property type="entry name" value="CHYMOTRYPSIN"/>
</dbReference>
<dbReference type="SMART" id="SM00032">
    <property type="entry name" value="CCP"/>
    <property type="match status" value="3"/>
</dbReference>
<dbReference type="SMART" id="SM00020">
    <property type="entry name" value="Tryp_SPc"/>
    <property type="match status" value="1"/>
</dbReference>
<dbReference type="SMART" id="SM00327">
    <property type="entry name" value="VWA"/>
    <property type="match status" value="1"/>
</dbReference>
<dbReference type="SUPFAM" id="SSF57535">
    <property type="entry name" value="Complement control module/SCR domain"/>
    <property type="match status" value="3"/>
</dbReference>
<dbReference type="SUPFAM" id="SSF50494">
    <property type="entry name" value="Trypsin-like serine proteases"/>
    <property type="match status" value="1"/>
</dbReference>
<dbReference type="SUPFAM" id="SSF53300">
    <property type="entry name" value="vWA-like"/>
    <property type="match status" value="1"/>
</dbReference>
<dbReference type="PROSITE" id="PS50923">
    <property type="entry name" value="SUSHI"/>
    <property type="match status" value="3"/>
</dbReference>
<dbReference type="PROSITE" id="PS50240">
    <property type="entry name" value="TRYPSIN_DOM"/>
    <property type="match status" value="1"/>
</dbReference>
<dbReference type="PROSITE" id="PS00134">
    <property type="entry name" value="TRYPSIN_HIS"/>
    <property type="match status" value="1"/>
</dbReference>
<dbReference type="PROSITE" id="PS00135">
    <property type="entry name" value="TRYPSIN_SER"/>
    <property type="match status" value="1"/>
</dbReference>
<dbReference type="PROSITE" id="PS50234">
    <property type="entry name" value="VWFA"/>
    <property type="match status" value="1"/>
</dbReference>
<organism>
    <name type="scientific">Homo sapiens</name>
    <name type="common">Human</name>
    <dbReference type="NCBI Taxonomy" id="9606"/>
    <lineage>
        <taxon>Eukaryota</taxon>
        <taxon>Metazoa</taxon>
        <taxon>Chordata</taxon>
        <taxon>Craniata</taxon>
        <taxon>Vertebrata</taxon>
        <taxon>Euteleostomi</taxon>
        <taxon>Mammalia</taxon>
        <taxon>Eutheria</taxon>
        <taxon>Euarchontoglires</taxon>
        <taxon>Primates</taxon>
        <taxon>Haplorrhini</taxon>
        <taxon>Catarrhini</taxon>
        <taxon>Hominidae</taxon>
        <taxon>Homo</taxon>
    </lineage>
</organism>
<keyword id="KW-0002">3D-structure</keyword>
<keyword id="KW-0913">Age-related macular degeneration</keyword>
<keyword id="KW-0025">Alternative splicing</keyword>
<keyword id="KW-0180">Complement pathway</keyword>
<keyword id="KW-0903">Direct protein sequencing</keyword>
<keyword id="KW-0225">Disease variant</keyword>
<keyword id="KW-1015">Disulfide bond</keyword>
<keyword id="KW-0325">Glycoprotein</keyword>
<keyword id="KW-0378">Hydrolase</keyword>
<keyword id="KW-0391">Immunity</keyword>
<keyword id="KW-0399">Innate immunity</keyword>
<keyword id="KW-0479">Metal-binding</keyword>
<keyword id="KW-0645">Protease</keyword>
<keyword id="KW-1267">Proteomics identification</keyword>
<keyword id="KW-1185">Reference proteome</keyword>
<keyword id="KW-0677">Repeat</keyword>
<keyword id="KW-0964">Secreted</keyword>
<keyword id="KW-0720">Serine protease</keyword>
<keyword id="KW-0732">Signal</keyword>
<keyword id="KW-0768">Sushi</keyword>
<gene>
    <name evidence="33 36" type="primary">C2</name>
</gene>
<protein>
    <recommendedName>
        <fullName evidence="34">Complement C2</fullName>
    </recommendedName>
    <alternativeName>
        <fullName>C3/C5 convertase</fullName>
    </alternativeName>
    <component>
        <recommendedName>
            <fullName>Complement C2a</fullName>
        </recommendedName>
    </component>
    <component>
        <recommendedName>
            <fullName>Serine protease complement C2b</fullName>
            <ecNumber evidence="8 12">3.4.21.43</ecNumber>
        </recommendedName>
    </component>
</protein>
<name>CO2_HUMAN</name>
<evidence type="ECO:0000255" key="1"/>
<evidence type="ECO:0000255" key="2">
    <source>
        <dbReference type="PROSITE-ProRule" id="PRU00219"/>
    </source>
</evidence>
<evidence type="ECO:0000255" key="3">
    <source>
        <dbReference type="PROSITE-ProRule" id="PRU00274"/>
    </source>
</evidence>
<evidence type="ECO:0000255" key="4">
    <source>
        <dbReference type="PROSITE-ProRule" id="PRU00302"/>
    </source>
</evidence>
<evidence type="ECO:0000269" key="5">
    <source>
    </source>
</evidence>
<evidence type="ECO:0000269" key="6">
    <source>
    </source>
</evidence>
<evidence type="ECO:0000269" key="7">
    <source>
    </source>
</evidence>
<evidence type="ECO:0000269" key="8">
    <source>
    </source>
</evidence>
<evidence type="ECO:0000269" key="9">
    <source>
    </source>
</evidence>
<evidence type="ECO:0000269" key="10">
    <source>
    </source>
</evidence>
<evidence type="ECO:0000269" key="11">
    <source>
    </source>
</evidence>
<evidence type="ECO:0000269" key="12">
    <source>
    </source>
</evidence>
<evidence type="ECO:0000269" key="13">
    <source>
    </source>
</evidence>
<evidence type="ECO:0000269" key="14">
    <source>
    </source>
</evidence>
<evidence type="ECO:0000269" key="15">
    <source>
    </source>
</evidence>
<evidence type="ECO:0000269" key="16">
    <source>
    </source>
</evidence>
<evidence type="ECO:0000269" key="17">
    <source>
    </source>
</evidence>
<evidence type="ECO:0000269" key="18">
    <source>
    </source>
</evidence>
<evidence type="ECO:0000269" key="19">
    <source>
    </source>
</evidence>
<evidence type="ECO:0000269" key="20">
    <source>
    </source>
</evidence>
<evidence type="ECO:0000269" key="21">
    <source>
    </source>
</evidence>
<evidence type="ECO:0000269" key="22">
    <source>
    </source>
</evidence>
<evidence type="ECO:0000269" key="23">
    <source>
    </source>
</evidence>
<evidence type="ECO:0000269" key="24">
    <source>
    </source>
</evidence>
<evidence type="ECO:0000269" key="25">
    <source>
    </source>
</evidence>
<evidence type="ECO:0000269" key="26">
    <source>
    </source>
</evidence>
<evidence type="ECO:0000269" key="27">
    <source>
    </source>
</evidence>
<evidence type="ECO:0000269" key="28">
    <source>
    </source>
</evidence>
<evidence type="ECO:0000269" key="29">
    <source>
    </source>
</evidence>
<evidence type="ECO:0000269" key="30">
    <source>
    </source>
</evidence>
<evidence type="ECO:0000269" key="31">
    <source ref="5"/>
</evidence>
<evidence type="ECO:0000303" key="32">
    <source>
    </source>
</evidence>
<evidence type="ECO:0000303" key="33">
    <source>
    </source>
</evidence>
<evidence type="ECO:0000305" key="34"/>
<evidence type="ECO:0000305" key="35">
    <source>
    </source>
</evidence>
<evidence type="ECO:0000312" key="36">
    <source>
        <dbReference type="HGNC" id="HGNC:1248"/>
    </source>
</evidence>
<evidence type="ECO:0007744" key="37">
    <source>
        <dbReference type="PDB" id="2I6Q"/>
    </source>
</evidence>
<evidence type="ECO:0007744" key="38">
    <source>
        <dbReference type="PDB" id="2ODP"/>
    </source>
</evidence>
<evidence type="ECO:0007744" key="39">
    <source>
        <dbReference type="PDB" id="2ODQ"/>
    </source>
</evidence>
<evidence type="ECO:0007829" key="40">
    <source>
        <dbReference type="PDB" id="2I6Q"/>
    </source>
</evidence>
<evidence type="ECO:0007829" key="41">
    <source>
        <dbReference type="PDB" id="2I6S"/>
    </source>
</evidence>
<evidence type="ECO:0007829" key="42">
    <source>
        <dbReference type="PDB" id="3ERB"/>
    </source>
</evidence>
<feature type="signal peptide" evidence="5 26">
    <location>
        <begin position="1"/>
        <end position="20"/>
    </location>
</feature>
<feature type="chain" id="PRO_0000027610" description="Complement C2">
    <location>
        <begin position="21"/>
        <end position="752"/>
    </location>
</feature>
<feature type="chain" id="PRO_0000027611" description="Complement C2a" evidence="35">
    <location>
        <begin position="21"/>
        <end position="243"/>
    </location>
</feature>
<feature type="chain" id="PRO_0000027612" description="Serine protease complement C2b" evidence="35">
    <location>
        <begin position="244"/>
        <end position="752"/>
    </location>
</feature>
<feature type="domain" description="Sushi 1" evidence="4">
    <location>
        <begin position="22"/>
        <end position="86"/>
    </location>
</feature>
<feature type="domain" description="Sushi 2" evidence="4">
    <location>
        <begin position="87"/>
        <end position="146"/>
    </location>
</feature>
<feature type="domain" description="Sushi 3" evidence="4">
    <location>
        <begin position="149"/>
        <end position="206"/>
    </location>
</feature>
<feature type="domain" description="VWFA" evidence="2">
    <location>
        <begin position="254"/>
        <end position="452"/>
    </location>
</feature>
<feature type="domain" description="Peptidase S1" evidence="3">
    <location>
        <begin position="464"/>
        <end position="744"/>
    </location>
</feature>
<feature type="short sequence motif" description="MIDAS-like motif" evidence="12">
    <location>
        <begin position="260"/>
        <end position="264"/>
    </location>
</feature>
<feature type="active site" description="Charge relay system" evidence="12">
    <location>
        <position position="507"/>
    </location>
</feature>
<feature type="active site" description="Charge relay system" evidence="12">
    <location>
        <position position="561"/>
    </location>
</feature>
<feature type="active site" description="Charge relay system" evidence="12">
    <location>
        <position position="679"/>
    </location>
</feature>
<feature type="binding site" evidence="13 38">
    <location>
        <position position="262"/>
    </location>
    <ligand>
        <name>Mg(2+)</name>
        <dbReference type="ChEBI" id="CHEBI:18420"/>
    </ligand>
</feature>
<feature type="binding site" evidence="12 37">
    <location>
        <position position="262"/>
    </location>
    <ligand>
        <name>Mn(2+)</name>
        <dbReference type="ChEBI" id="CHEBI:29035"/>
    </ligand>
</feature>
<feature type="binding site" evidence="13 38">
    <location>
        <position position="264"/>
    </location>
    <ligand>
        <name>Mg(2+)</name>
        <dbReference type="ChEBI" id="CHEBI:18420"/>
    </ligand>
</feature>
<feature type="binding site" evidence="12 37">
    <location>
        <position position="264"/>
    </location>
    <ligand>
        <name>Mn(2+)</name>
        <dbReference type="ChEBI" id="CHEBI:29035"/>
    </ligand>
</feature>
<feature type="binding site" evidence="13 38">
    <location>
        <position position="337"/>
    </location>
    <ligand>
        <name>Mg(2+)</name>
        <dbReference type="ChEBI" id="CHEBI:18420"/>
    </ligand>
</feature>
<feature type="binding site" evidence="12 37">
    <location>
        <position position="337"/>
    </location>
    <ligand>
        <name>Mn(2+)</name>
        <dbReference type="ChEBI" id="CHEBI:29035"/>
    </ligand>
</feature>
<feature type="site" description="Cleavage; by C1S, MASP2 and GZMK" evidence="21">
    <location>
        <begin position="243"/>
        <end position="244"/>
    </location>
</feature>
<feature type="glycosylation site" description="N-linked (GlcNAc...) asparagine" evidence="1">
    <location>
        <position position="29"/>
    </location>
</feature>
<feature type="glycosylation site" description="N-linked (GlcNAc...) asparagine" evidence="10 15">
    <location>
        <position position="112"/>
    </location>
</feature>
<feature type="glycosylation site" description="N-linked (GlcNAc...) asparagine" evidence="1">
    <location>
        <position position="290"/>
    </location>
</feature>
<feature type="glycosylation site" description="N-linked (GlcNAc...) asparagine" evidence="10 12 15">
    <location>
        <position position="333"/>
    </location>
</feature>
<feature type="glycosylation site" description="N-linked (GlcNAc...) asparagine" evidence="10 12">
    <location>
        <position position="467"/>
    </location>
</feature>
<feature type="glycosylation site" description="N-linked (GlcNAc...) asparagine" evidence="10">
    <location>
        <position position="471"/>
    </location>
</feature>
<feature type="glycosylation site" description="N-linked (GlcNAc...) asparagine" evidence="10 12">
    <location>
        <position position="621"/>
    </location>
</feature>
<feature type="glycosylation site" description="N-linked (GlcNAc...) (complex) asparagine" evidence="10 13 39">
    <location>
        <position position="651"/>
    </location>
</feature>
<feature type="disulfide bond" evidence="16">
    <location>
        <begin position="24"/>
        <end position="64"/>
    </location>
</feature>
<feature type="disulfide bond" evidence="16">
    <location>
        <begin position="51"/>
        <end position="84"/>
    </location>
</feature>
<feature type="disulfide bond" evidence="16">
    <location>
        <begin position="89"/>
        <end position="131"/>
    </location>
</feature>
<feature type="disulfide bond" evidence="16">
    <location>
        <begin position="117"/>
        <end position="144"/>
    </location>
</feature>
<feature type="disulfide bond" evidence="16">
    <location>
        <begin position="151"/>
        <end position="191"/>
    </location>
</feature>
<feature type="disulfide bond" evidence="16">
    <location>
        <begin position="177"/>
        <end position="204"/>
    </location>
</feature>
<feature type="disulfide bond" evidence="12 13 37 39">
    <location>
        <begin position="463"/>
        <end position="581"/>
    </location>
</feature>
<feature type="disulfide bond" evidence="12 13 37 39">
    <location>
        <begin position="492"/>
        <end position="508"/>
    </location>
</feature>
<feature type="disulfide bond" evidence="12 13 37 39">
    <location>
        <begin position="584"/>
        <end position="600"/>
    </location>
</feature>
<feature type="disulfide bond" evidence="12 13 37 39">
    <location>
        <begin position="638"/>
        <end position="665"/>
    </location>
</feature>
<feature type="disulfide bond" evidence="12 13 37 39">
    <location>
        <begin position="675"/>
        <end position="705"/>
    </location>
</feature>
<feature type="splice variant" id="VSP_043038" description="In isoform 2." evidence="32">
    <original>MGPLMVLFCLLFLYPGLADSAPSCPQNVNISGGTFTLSHGWAPGSLLTYSCPQGLYPSPASRLCKSSGQWQTPGATRSLSKAVCKPVRCPAPVSFENGIYTPRLGSYPVGGNVSFECEDGFILRGSPVRQCRPNGMWDGETAVCDNG</original>
    <variation>MRALCIRETCSSELGFSRNWSRRK</variation>
    <location>
        <begin position="1"/>
        <end position="147"/>
    </location>
</feature>
<feature type="splice variant" id="VSP_046103" description="In isoform 3." evidence="32">
    <location>
        <begin position="16"/>
        <end position="147"/>
    </location>
</feature>
<feature type="splice variant" id="VSP_043039" description="In isoform 2." evidence="32">
    <location>
        <begin position="238"/>
        <end position="328"/>
    </location>
</feature>
<feature type="sequence variant" id="VAR_008544" description="In C2D; dbSNP:rs760744400." evidence="30">
    <original>C</original>
    <variation>Y</variation>
    <location>
        <position position="131"/>
    </location>
</feature>
<feature type="sequence variant" id="VAR_008545" description="In C2D; dbSNP:rs28934590." evidence="28">
    <original>S</original>
    <variation>F</variation>
    <location>
        <position position="209"/>
    </location>
</feature>
<feature type="sequence variant" id="VAR_019158" description="May be associated with a reduced risk for age-related macular degeneration; dbSNP:rs9332739." evidence="11 31">
    <original>E</original>
    <variation>D</variation>
    <location>
        <position position="318"/>
    </location>
</feature>
<feature type="sequence variant" id="VAR_008546" description="In C2D; dbSNP:rs151340617." evidence="28">
    <original>G</original>
    <variation>R</variation>
    <location>
        <position position="464"/>
    </location>
</feature>
<feature type="sequence variant" id="VAR_011772" description="In dbSNP:rs1042664.">
    <original>F</original>
    <variation>L</variation>
    <location>
        <position position="533"/>
    </location>
</feature>
<feature type="sequence variant" id="VAR_019159" description="In dbSNP:rs4151648." evidence="31">
    <original>R</original>
    <variation>C</variation>
    <location>
        <position position="734"/>
    </location>
</feature>
<feature type="mutagenesis site" description="Prolonged activity and half-life." evidence="17">
    <original>C</original>
    <variation>A</variation>
    <location>
        <position position="261"/>
    </location>
</feature>
<feature type="mutagenesis site" description="Prolonged activity and half-life." evidence="17">
    <original>Q</original>
    <variation>K</variation>
    <location>
        <position position="263"/>
    </location>
</feature>
<feature type="mutagenesis site" description="Promotes partial resistance to degradation, slightly increasing half-life of the protein." evidence="8">
    <original>N</original>
    <variation>A</variation>
    <location>
        <position position="344"/>
    </location>
</feature>
<feature type="mutagenesis site" description="Promotes resistance to degradation, increasing half-life of the protein." evidence="8">
    <original>Y</original>
    <variation>A</variation>
    <location>
        <position position="347"/>
    </location>
</feature>
<feature type="mutagenesis site" description="Promotes partial resistance to degradation, slightly increasing half-life of the protein." evidence="8">
    <original>L</original>
    <variation>A</variation>
    <location>
        <position position="348"/>
    </location>
</feature>
<feature type="sequence conflict" description="In Ref. 9; AA sequence." evidence="34" ref="9">
    <original>I</original>
    <variation>L</variation>
    <location>
        <position position="30"/>
    </location>
</feature>
<feature type="sequence conflict" description="In Ref. 9; AA sequence." evidence="34" ref="9">
    <original>T</original>
    <variation>S</variation>
    <location>
        <position position="34"/>
    </location>
</feature>
<feature type="sequence conflict" description="In Ref. 6; BAG62532." evidence="34" ref="6">
    <original>D</original>
    <variation>G</variation>
    <location>
        <position position="211"/>
    </location>
</feature>
<feature type="sequence conflict" description="In Ref. 9; AA sequence." evidence="34" ref="9">
    <original>R</original>
    <variation>S</variation>
    <location>
        <position position="249"/>
    </location>
</feature>
<feature type="sequence conflict" description="In Ref. 9; AA sequence." evidence="34" ref="9">
    <original>L</original>
    <variation>K</variation>
    <location>
        <position position="253"/>
    </location>
</feature>
<feature type="strand" evidence="42">
    <location>
        <begin position="34"/>
        <end position="39"/>
    </location>
</feature>
<feature type="strand" evidence="42">
    <location>
        <begin position="46"/>
        <end position="50"/>
    </location>
</feature>
<feature type="strand" evidence="42">
    <location>
        <begin position="55"/>
        <end position="59"/>
    </location>
</feature>
<feature type="strand" evidence="42">
    <location>
        <begin position="61"/>
        <end position="64"/>
    </location>
</feature>
<feature type="strand" evidence="42">
    <location>
        <begin position="83"/>
        <end position="86"/>
    </location>
</feature>
<feature type="strand" evidence="42">
    <location>
        <begin position="88"/>
        <end position="90"/>
    </location>
</feature>
<feature type="strand" evidence="42">
    <location>
        <begin position="98"/>
        <end position="102"/>
    </location>
</feature>
<feature type="strand" evidence="42">
    <location>
        <begin position="105"/>
        <end position="108"/>
    </location>
</feature>
<feature type="strand" evidence="42">
    <location>
        <begin position="112"/>
        <end position="117"/>
    </location>
</feature>
<feature type="strand" evidence="42">
    <location>
        <begin position="122"/>
        <end position="125"/>
    </location>
</feature>
<feature type="strand" evidence="42">
    <location>
        <begin position="127"/>
        <end position="131"/>
    </location>
</feature>
<feature type="strand" evidence="42">
    <location>
        <begin position="137"/>
        <end position="139"/>
    </location>
</feature>
<feature type="strand" evidence="42">
    <location>
        <begin position="143"/>
        <end position="145"/>
    </location>
</feature>
<feature type="strand" evidence="42">
    <location>
        <begin position="149"/>
        <end position="151"/>
    </location>
</feature>
<feature type="strand" evidence="42">
    <location>
        <begin position="160"/>
        <end position="163"/>
    </location>
</feature>
<feature type="strand" evidence="42">
    <location>
        <begin position="172"/>
        <end position="177"/>
    </location>
</feature>
<feature type="strand" evidence="42">
    <location>
        <begin position="182"/>
        <end position="185"/>
    </location>
</feature>
<feature type="strand" evidence="42">
    <location>
        <begin position="187"/>
        <end position="191"/>
    </location>
</feature>
<feature type="strand" evidence="42">
    <location>
        <begin position="197"/>
        <end position="199"/>
    </location>
</feature>
<feature type="strand" evidence="42">
    <location>
        <begin position="203"/>
        <end position="205"/>
    </location>
</feature>
<feature type="helix" evidence="42">
    <location>
        <begin position="207"/>
        <end position="211"/>
    </location>
</feature>
<feature type="strand" evidence="40">
    <location>
        <begin position="249"/>
        <end position="260"/>
    </location>
</feature>
<feature type="helix" evidence="40">
    <location>
        <begin position="267"/>
        <end position="284"/>
    </location>
</feature>
<feature type="helix" evidence="40">
    <location>
        <begin position="285"/>
        <end position="287"/>
    </location>
</feature>
<feature type="strand" evidence="40">
    <location>
        <begin position="291"/>
        <end position="306"/>
    </location>
</feature>
<feature type="helix" evidence="40">
    <location>
        <begin position="311"/>
        <end position="314"/>
    </location>
</feature>
<feature type="helix" evidence="40">
    <location>
        <begin position="316"/>
        <end position="325"/>
    </location>
</feature>
<feature type="helix" evidence="40">
    <location>
        <begin position="328"/>
        <end position="331"/>
    </location>
</feature>
<feature type="helix" evidence="40">
    <location>
        <begin position="339"/>
        <end position="357"/>
    </location>
</feature>
<feature type="strand" evidence="41">
    <location>
        <begin position="359"/>
        <end position="361"/>
    </location>
</feature>
<feature type="helix" evidence="40">
    <location>
        <begin position="362"/>
        <end position="365"/>
    </location>
</feature>
<feature type="strand" evidence="40">
    <location>
        <begin position="367"/>
        <end position="375"/>
    </location>
</feature>
<feature type="strand" evidence="40">
    <location>
        <begin position="381"/>
        <end position="383"/>
    </location>
</feature>
<feature type="helix" evidence="40">
    <location>
        <begin position="385"/>
        <end position="396"/>
    </location>
</feature>
<feature type="helix" evidence="40">
    <location>
        <begin position="401"/>
        <end position="405"/>
    </location>
</feature>
<feature type="strand" evidence="40">
    <location>
        <begin position="406"/>
        <end position="415"/>
    </location>
</feature>
<feature type="helix" evidence="40">
    <location>
        <begin position="420"/>
        <end position="426"/>
    </location>
</feature>
<feature type="strand" evidence="40">
    <location>
        <begin position="436"/>
        <end position="441"/>
    </location>
</feature>
<feature type="helix" evidence="40">
    <location>
        <begin position="442"/>
        <end position="452"/>
    </location>
</feature>
<feature type="strand" evidence="40">
    <location>
        <begin position="470"/>
        <end position="472"/>
    </location>
</feature>
<feature type="helix" evidence="40">
    <location>
        <begin position="474"/>
        <end position="477"/>
    </location>
</feature>
<feature type="strand" evidence="40">
    <location>
        <begin position="481"/>
        <end position="485"/>
    </location>
</feature>
<feature type="strand" evidence="40">
    <location>
        <begin position="492"/>
        <end position="504"/>
    </location>
</feature>
<feature type="helix" evidence="40">
    <location>
        <begin position="506"/>
        <end position="508"/>
    </location>
</feature>
<feature type="helix" evidence="40">
    <location>
        <begin position="515"/>
        <end position="517"/>
    </location>
</feature>
<feature type="strand" evidence="40">
    <location>
        <begin position="519"/>
        <end position="522"/>
    </location>
</feature>
<feature type="strand" evidence="40">
    <location>
        <begin position="531"/>
        <end position="533"/>
    </location>
</feature>
<feature type="strand" evidence="40">
    <location>
        <begin position="535"/>
        <end position="540"/>
    </location>
</feature>
<feature type="turn" evidence="40">
    <location>
        <begin position="546"/>
        <end position="549"/>
    </location>
</feature>
<feature type="helix" evidence="40">
    <location>
        <begin position="550"/>
        <end position="552"/>
    </location>
</feature>
<feature type="strand" evidence="40">
    <location>
        <begin position="563"/>
        <end position="569"/>
    </location>
</feature>
<feature type="strand" evidence="41">
    <location>
        <begin position="574"/>
        <end position="576"/>
    </location>
</feature>
<feature type="helix" evidence="40">
    <location>
        <begin position="586"/>
        <end position="591"/>
    </location>
</feature>
<feature type="helix" evidence="40">
    <location>
        <begin position="600"/>
        <end position="607"/>
    </location>
</feature>
<feature type="strand" evidence="40">
    <location>
        <begin position="610"/>
        <end position="618"/>
    </location>
</feature>
<feature type="strand" evidence="40">
    <location>
        <begin position="624"/>
        <end position="630"/>
    </location>
</feature>
<feature type="helix" evidence="40">
    <location>
        <begin position="633"/>
        <end position="639"/>
    </location>
</feature>
<feature type="helix" evidence="40">
    <location>
        <begin position="640"/>
        <end position="644"/>
    </location>
</feature>
<feature type="strand" evidence="40">
    <location>
        <begin position="646"/>
        <end position="648"/>
    </location>
</feature>
<feature type="helix" evidence="40">
    <location>
        <begin position="655"/>
        <end position="657"/>
    </location>
</feature>
<feature type="strand" evidence="40">
    <location>
        <begin position="663"/>
        <end position="666"/>
    </location>
</feature>
<feature type="helix" evidence="40">
    <location>
        <begin position="676"/>
        <end position="678"/>
    </location>
</feature>
<feature type="strand" evidence="40">
    <location>
        <begin position="681"/>
        <end position="687"/>
    </location>
</feature>
<feature type="strand" evidence="40">
    <location>
        <begin position="690"/>
        <end position="701"/>
    </location>
</feature>
<feature type="turn" evidence="41">
    <location>
        <begin position="704"/>
        <end position="707"/>
    </location>
</feature>
<feature type="strand" evidence="40">
    <location>
        <begin position="720"/>
        <end position="723"/>
    </location>
</feature>
<feature type="strand" evidence="40">
    <location>
        <begin position="727"/>
        <end position="731"/>
    </location>
</feature>
<feature type="helix" evidence="40">
    <location>
        <begin position="732"/>
        <end position="734"/>
    </location>
</feature>
<feature type="helix" evidence="40">
    <location>
        <begin position="736"/>
        <end position="743"/>
    </location>
</feature>
<feature type="turn" evidence="40">
    <location>
        <begin position="744"/>
        <end position="746"/>
    </location>
</feature>
<sequence length="752" mass="83268">MGPLMVLFCLLFLYPGLADSAPSCPQNVNISGGTFTLSHGWAPGSLLTYSCPQGLYPSPASRLCKSSGQWQTPGATRSLSKAVCKPVRCPAPVSFENGIYTPRLGSYPVGGNVSFECEDGFILRGSPVRQCRPNGMWDGETAVCDNGAGHCPNPGISLGAVRTGFRFGHGDKVRYRCSSNLVLTGSSERECQGNGVWSGTEPICRQPYSYDFPEDVAPALGTSFSHMLGATNPTQKTKESLGRKIQIQRSGHLNLYLLLDCSQSVSENDFLIFKESASLMVDRIFSFEINVSVAIITFASEPKVLMSVLNDNSRDMTEVISSLENANYKDHENGTGTNTYAALNSVYLMMNNQMRLLGMETMAWQEIRHAIILLTDGKSNMGGSPKTAVDHIREILNINQKRNDYLDIYAIGVGKLDVDWRELNELGSKKDGERHAFILQDTKALHQVFEHMLDVSKLTDTICGVGNMSANASDQERTPWHVTIKPKSQETCRGALISDQWVLTAAHCFRDGNDHSLWRVNVGDPKSQWGKEFLIEKAVISPGFDVFAKKNQGILEFYGDDIALLKLAQKVKMSTHARPICLPCTMEANLALRRPQGSTCRDHENELLNKQSVPAHFVALNGSKLNINLKMGVEWTSCAEVVSQEKTMFPNLTDVREVVTDQFLCSGTQEDESPCKGESGGAVFLERRFRFFQVGLVSWGLYNPCLGSADKNSRKRAPRSKVPPPRDFHINLFRMQPWLRQHLGDVLNFLPL</sequence>
<accession>P06681</accession>
<accession>B4DPF3</accession>
<accession>B4DV20</accession>
<accession>E9PFN7</accession>
<accession>O19694</accession>
<accession>Q13904</accession>
<reference key="1">
    <citation type="journal article" date="1986" name="Biochem. J.">
        <title>Primary structure of human complement component C2. Homology to two unrelated protein families.</title>
        <authorList>
            <person name="Bentley D.R."/>
        </authorList>
    </citation>
    <scope>NUCLEOTIDE SEQUENCE [MRNA] (ISOFORM 1)</scope>
    <source>
        <tissue>Liver</tissue>
    </source>
</reference>
<reference key="2">
    <citation type="journal article" date="1989" name="J. Immunol.">
        <title>cDNA cloning and expression of human complement component C2.</title>
        <authorList>
            <person name="Horiuchi T."/>
            <person name="Macon K.J."/>
            <person name="Kidd V.J."/>
            <person name="Volanakis J.E."/>
        </authorList>
    </citation>
    <scope>NUCLEOTIDE SEQUENCE [MRNA] (ISOFORM 1)</scope>
    <source>
        <tissue>Liver</tissue>
    </source>
</reference>
<reference key="3">
    <citation type="journal article" date="1993" name="J. Immunol.">
        <title>Structure of the human C2 gene.</title>
        <authorList>
            <person name="Ishii Y."/>
            <person name="Zhu Z.B."/>
            <person name="Macon K.J."/>
            <person name="Volanakis J.E."/>
        </authorList>
    </citation>
    <scope>NUCLEOTIDE SEQUENCE [GENOMIC DNA]</scope>
</reference>
<reference key="4">
    <citation type="submission" date="1997-09" db="EMBL/GenBank/DDBJ databases">
        <title>Sequence determination of 300 kilobases of the human class III MHC locus.</title>
        <authorList>
            <person name="Rowen L."/>
            <person name="Dankers C."/>
            <person name="Baskin D."/>
            <person name="Faust J."/>
            <person name="Loretz C."/>
            <person name="Ahearn M.E."/>
            <person name="Banta A."/>
            <person name="Swartzell S."/>
            <person name="Smith T.M."/>
            <person name="Spies T."/>
            <person name="Hood L."/>
        </authorList>
    </citation>
    <scope>NUCLEOTIDE SEQUENCE [GENOMIC DNA]</scope>
</reference>
<reference key="5">
    <citation type="submission" date="2003-07" db="EMBL/GenBank/DDBJ databases">
        <authorList>
            <consortium name="SeattleSNPs variation discovery resource"/>
        </authorList>
    </citation>
    <scope>NUCLEOTIDE SEQUENCE [GENOMIC DNA]</scope>
    <scope>VARIANTS ASP-318 AND CYS-734</scope>
</reference>
<reference key="6">
    <citation type="journal article" date="2004" name="Nat. Genet.">
        <title>Complete sequencing and characterization of 21,243 full-length human cDNAs.</title>
        <authorList>
            <person name="Ota T."/>
            <person name="Suzuki Y."/>
            <person name="Nishikawa T."/>
            <person name="Otsuki T."/>
            <person name="Sugiyama T."/>
            <person name="Irie R."/>
            <person name="Wakamatsu A."/>
            <person name="Hayashi K."/>
            <person name="Sato H."/>
            <person name="Nagai K."/>
            <person name="Kimura K."/>
            <person name="Makita H."/>
            <person name="Sekine M."/>
            <person name="Obayashi M."/>
            <person name="Nishi T."/>
            <person name="Shibahara T."/>
            <person name="Tanaka T."/>
            <person name="Ishii S."/>
            <person name="Yamamoto J."/>
            <person name="Saito K."/>
            <person name="Kawai Y."/>
            <person name="Isono Y."/>
            <person name="Nakamura Y."/>
            <person name="Nagahari K."/>
            <person name="Murakami K."/>
            <person name="Yasuda T."/>
            <person name="Iwayanagi T."/>
            <person name="Wagatsuma M."/>
            <person name="Shiratori A."/>
            <person name="Sudo H."/>
            <person name="Hosoiri T."/>
            <person name="Kaku Y."/>
            <person name="Kodaira H."/>
            <person name="Kondo H."/>
            <person name="Sugawara M."/>
            <person name="Takahashi M."/>
            <person name="Kanda K."/>
            <person name="Yokoi T."/>
            <person name="Furuya T."/>
            <person name="Kikkawa E."/>
            <person name="Omura Y."/>
            <person name="Abe K."/>
            <person name="Kamihara K."/>
            <person name="Katsuta N."/>
            <person name="Sato K."/>
            <person name="Tanikawa M."/>
            <person name="Yamazaki M."/>
            <person name="Ninomiya K."/>
            <person name="Ishibashi T."/>
            <person name="Yamashita H."/>
            <person name="Murakawa K."/>
            <person name="Fujimori K."/>
            <person name="Tanai H."/>
            <person name="Kimata M."/>
            <person name="Watanabe M."/>
            <person name="Hiraoka S."/>
            <person name="Chiba Y."/>
            <person name="Ishida S."/>
            <person name="Ono Y."/>
            <person name="Takiguchi S."/>
            <person name="Watanabe S."/>
            <person name="Yosida M."/>
            <person name="Hotuta T."/>
            <person name="Kusano J."/>
            <person name="Kanehori K."/>
            <person name="Takahashi-Fujii A."/>
            <person name="Hara H."/>
            <person name="Tanase T.-O."/>
            <person name="Nomura Y."/>
            <person name="Togiya S."/>
            <person name="Komai F."/>
            <person name="Hara R."/>
            <person name="Takeuchi K."/>
            <person name="Arita M."/>
            <person name="Imose N."/>
            <person name="Musashino K."/>
            <person name="Yuuki H."/>
            <person name="Oshima A."/>
            <person name="Sasaki N."/>
            <person name="Aotsuka S."/>
            <person name="Yoshikawa Y."/>
            <person name="Matsunawa H."/>
            <person name="Ichihara T."/>
            <person name="Shiohata N."/>
            <person name="Sano S."/>
            <person name="Moriya S."/>
            <person name="Momiyama H."/>
            <person name="Satoh N."/>
            <person name="Takami S."/>
            <person name="Terashima Y."/>
            <person name="Suzuki O."/>
            <person name="Nakagawa S."/>
            <person name="Senoh A."/>
            <person name="Mizoguchi H."/>
            <person name="Goto Y."/>
            <person name="Shimizu F."/>
            <person name="Wakebe H."/>
            <person name="Hishigaki H."/>
            <person name="Watanabe T."/>
            <person name="Sugiyama A."/>
            <person name="Takemoto M."/>
            <person name="Kawakami B."/>
            <person name="Yamazaki M."/>
            <person name="Watanabe K."/>
            <person name="Kumagai A."/>
            <person name="Itakura S."/>
            <person name="Fukuzumi Y."/>
            <person name="Fujimori Y."/>
            <person name="Komiyama M."/>
            <person name="Tashiro H."/>
            <person name="Tanigami A."/>
            <person name="Fujiwara T."/>
            <person name="Ono T."/>
            <person name="Yamada K."/>
            <person name="Fujii Y."/>
            <person name="Ozaki K."/>
            <person name="Hirao M."/>
            <person name="Ohmori Y."/>
            <person name="Kawabata A."/>
            <person name="Hikiji T."/>
            <person name="Kobatake N."/>
            <person name="Inagaki H."/>
            <person name="Ikema Y."/>
            <person name="Okamoto S."/>
            <person name="Okitani R."/>
            <person name="Kawakami T."/>
            <person name="Noguchi S."/>
            <person name="Itoh T."/>
            <person name="Shigeta K."/>
            <person name="Senba T."/>
            <person name="Matsumura K."/>
            <person name="Nakajima Y."/>
            <person name="Mizuno T."/>
            <person name="Morinaga M."/>
            <person name="Sasaki M."/>
            <person name="Togashi T."/>
            <person name="Oyama M."/>
            <person name="Hata H."/>
            <person name="Watanabe M."/>
            <person name="Komatsu T."/>
            <person name="Mizushima-Sugano J."/>
            <person name="Satoh T."/>
            <person name="Shirai Y."/>
            <person name="Takahashi Y."/>
            <person name="Nakagawa K."/>
            <person name="Okumura K."/>
            <person name="Nagase T."/>
            <person name="Nomura N."/>
            <person name="Kikuchi H."/>
            <person name="Masuho Y."/>
            <person name="Yamashita R."/>
            <person name="Nakai K."/>
            <person name="Yada T."/>
            <person name="Nakamura Y."/>
            <person name="Ohara O."/>
            <person name="Isogai T."/>
            <person name="Sugano S."/>
        </authorList>
    </citation>
    <scope>NUCLEOTIDE SEQUENCE [LARGE SCALE MRNA] (ISOFORMS 2 AND 3)</scope>
    <source>
        <tissue>Kidney</tissue>
        <tissue>Small intestine</tissue>
    </source>
</reference>
<reference key="7">
    <citation type="journal article" date="2003" name="Nature">
        <title>The DNA sequence and analysis of human chromosome 6.</title>
        <authorList>
            <person name="Mungall A.J."/>
            <person name="Palmer S.A."/>
            <person name="Sims S.K."/>
            <person name="Edwards C.A."/>
            <person name="Ashurst J.L."/>
            <person name="Wilming L."/>
            <person name="Jones M.C."/>
            <person name="Horton R."/>
            <person name="Hunt S.E."/>
            <person name="Scott C.E."/>
            <person name="Gilbert J.G.R."/>
            <person name="Clamp M.E."/>
            <person name="Bethel G."/>
            <person name="Milne S."/>
            <person name="Ainscough R."/>
            <person name="Almeida J.P."/>
            <person name="Ambrose K.D."/>
            <person name="Andrews T.D."/>
            <person name="Ashwell R.I.S."/>
            <person name="Babbage A.K."/>
            <person name="Bagguley C.L."/>
            <person name="Bailey J."/>
            <person name="Banerjee R."/>
            <person name="Barker D.J."/>
            <person name="Barlow K.F."/>
            <person name="Bates K."/>
            <person name="Beare D.M."/>
            <person name="Beasley H."/>
            <person name="Beasley O."/>
            <person name="Bird C.P."/>
            <person name="Blakey S.E."/>
            <person name="Bray-Allen S."/>
            <person name="Brook J."/>
            <person name="Brown A.J."/>
            <person name="Brown J.Y."/>
            <person name="Burford D.C."/>
            <person name="Burrill W."/>
            <person name="Burton J."/>
            <person name="Carder C."/>
            <person name="Carter N.P."/>
            <person name="Chapman J.C."/>
            <person name="Clark S.Y."/>
            <person name="Clark G."/>
            <person name="Clee C.M."/>
            <person name="Clegg S."/>
            <person name="Cobley V."/>
            <person name="Collier R.E."/>
            <person name="Collins J.E."/>
            <person name="Colman L.K."/>
            <person name="Corby N.R."/>
            <person name="Coville G.J."/>
            <person name="Culley K.M."/>
            <person name="Dhami P."/>
            <person name="Davies J."/>
            <person name="Dunn M."/>
            <person name="Earthrowl M.E."/>
            <person name="Ellington A.E."/>
            <person name="Evans K.A."/>
            <person name="Faulkner L."/>
            <person name="Francis M.D."/>
            <person name="Frankish A."/>
            <person name="Frankland J."/>
            <person name="French L."/>
            <person name="Garner P."/>
            <person name="Garnett J."/>
            <person name="Ghori M.J."/>
            <person name="Gilby L.M."/>
            <person name="Gillson C.J."/>
            <person name="Glithero R.J."/>
            <person name="Grafham D.V."/>
            <person name="Grant M."/>
            <person name="Gribble S."/>
            <person name="Griffiths C."/>
            <person name="Griffiths M.N.D."/>
            <person name="Hall R."/>
            <person name="Halls K.S."/>
            <person name="Hammond S."/>
            <person name="Harley J.L."/>
            <person name="Hart E.A."/>
            <person name="Heath P.D."/>
            <person name="Heathcott R."/>
            <person name="Holmes S.J."/>
            <person name="Howden P.J."/>
            <person name="Howe K.L."/>
            <person name="Howell G.R."/>
            <person name="Huckle E."/>
            <person name="Humphray S.J."/>
            <person name="Humphries M.D."/>
            <person name="Hunt A.R."/>
            <person name="Johnson C.M."/>
            <person name="Joy A.A."/>
            <person name="Kay M."/>
            <person name="Keenan S.J."/>
            <person name="Kimberley A.M."/>
            <person name="King A."/>
            <person name="Laird G.K."/>
            <person name="Langford C."/>
            <person name="Lawlor S."/>
            <person name="Leongamornlert D.A."/>
            <person name="Leversha M."/>
            <person name="Lloyd C.R."/>
            <person name="Lloyd D.M."/>
            <person name="Loveland J.E."/>
            <person name="Lovell J."/>
            <person name="Martin S."/>
            <person name="Mashreghi-Mohammadi M."/>
            <person name="Maslen G.L."/>
            <person name="Matthews L."/>
            <person name="McCann O.T."/>
            <person name="McLaren S.J."/>
            <person name="McLay K."/>
            <person name="McMurray A."/>
            <person name="Moore M.J.F."/>
            <person name="Mullikin J.C."/>
            <person name="Niblett D."/>
            <person name="Nickerson T."/>
            <person name="Novik K.L."/>
            <person name="Oliver K."/>
            <person name="Overton-Larty E.K."/>
            <person name="Parker A."/>
            <person name="Patel R."/>
            <person name="Pearce A.V."/>
            <person name="Peck A.I."/>
            <person name="Phillimore B.J.C.T."/>
            <person name="Phillips S."/>
            <person name="Plumb R.W."/>
            <person name="Porter K.M."/>
            <person name="Ramsey Y."/>
            <person name="Ranby S.A."/>
            <person name="Rice C.M."/>
            <person name="Ross M.T."/>
            <person name="Searle S.M."/>
            <person name="Sehra H.K."/>
            <person name="Sheridan E."/>
            <person name="Skuce C.D."/>
            <person name="Smith S."/>
            <person name="Smith M."/>
            <person name="Spraggon L."/>
            <person name="Squares S.L."/>
            <person name="Steward C.A."/>
            <person name="Sycamore N."/>
            <person name="Tamlyn-Hall G."/>
            <person name="Tester J."/>
            <person name="Theaker A.J."/>
            <person name="Thomas D.W."/>
            <person name="Thorpe A."/>
            <person name="Tracey A."/>
            <person name="Tromans A."/>
            <person name="Tubby B."/>
            <person name="Wall M."/>
            <person name="Wallis J.M."/>
            <person name="West A.P."/>
            <person name="White S.S."/>
            <person name="Whitehead S.L."/>
            <person name="Whittaker H."/>
            <person name="Wild A."/>
            <person name="Willey D.J."/>
            <person name="Wilmer T.E."/>
            <person name="Wood J.M."/>
            <person name="Wray P.W."/>
            <person name="Wyatt J.C."/>
            <person name="Young L."/>
            <person name="Younger R.M."/>
            <person name="Bentley D.R."/>
            <person name="Coulson A."/>
            <person name="Durbin R.M."/>
            <person name="Hubbard T."/>
            <person name="Sulston J.E."/>
            <person name="Dunham I."/>
            <person name="Rogers J."/>
            <person name="Beck S."/>
        </authorList>
    </citation>
    <scope>NUCLEOTIDE SEQUENCE [LARGE SCALE GENOMIC DNA]</scope>
</reference>
<reference key="8">
    <citation type="journal article" date="2004" name="Genome Res.">
        <title>The status, quality, and expansion of the NIH full-length cDNA project: the Mammalian Gene Collection (MGC).</title>
        <authorList>
            <consortium name="The MGC Project Team"/>
        </authorList>
    </citation>
    <scope>NUCLEOTIDE SEQUENCE [LARGE SCALE MRNA] (ISOFORM 1)</scope>
    <source>
        <tissue>Brain</tissue>
    </source>
</reference>
<reference key="9">
    <citation type="journal article" date="1982" name="Biochem. J.">
        <title>The purification and properties of the second component of guinea-pig complement.</title>
        <authorList>
            <person name="Kerr M.A."/>
            <person name="Gagnon J."/>
        </authorList>
    </citation>
    <scope>PROTEIN SEQUENCE OF 21-46 AND 244-256</scope>
</reference>
<reference key="10">
    <citation type="journal article" date="1985" name="Immunogenetics">
        <title>DNA polymorphism of the C2 locus.</title>
        <authorList>
            <person name="Bentley D.R."/>
            <person name="Campbell R.D."/>
            <person name="Cross S.J."/>
        </authorList>
    </citation>
    <scope>NUCLEOTIDE SEQUENCE [GENOMIC DNA] OF 21-46</scope>
</reference>
<reference key="11">
    <citation type="journal article" date="2000" name="FEBS Lett.">
        <title>A Schistosoma protein, Sh-TOR, is a novel inhibitor of complement which binds human C2.</title>
        <authorList>
            <person name="Inal J.M."/>
            <person name="Sim R.B."/>
        </authorList>
    </citation>
    <scope>PROTEIN SEQUENCE OF 21-28</scope>
    <scope>INTERACTION WITH SCHISTOSOMA HAEMATOBIUM TOR</scope>
</reference>
<reference key="12">
    <citation type="journal article" date="1984" name="Philos. Trans. R. Soc. Lond., B, Biol. Sci.">
        <title>Structure and activation of complement components C2 and factor B.</title>
        <authorList>
            <person name="Gagnon J."/>
        </authorList>
    </citation>
    <scope>PROTEIN SEQUENCE OF 137-171; 454-466 AND 574-717</scope>
</reference>
<reference key="13">
    <citation type="journal article" date="1983" name="Biochem. J.">
        <title>The reaction of iodine and thiol-blocking reagents with human complement components C2 and factor B. Purification and N-terminal amino acid sequence of a peptide from C2a containing a free thiol group.</title>
        <authorList>
            <person name="Parkes C."/>
            <person name="Gagnon J."/>
            <person name="Kerr M.A."/>
        </authorList>
    </citation>
    <scope>PROTEIN SEQUENCE OF 244-269</scope>
</reference>
<reference key="14">
    <citation type="journal article" date="1984" name="Proc. Natl. Acad. Sci. U.S.A.">
        <title>Isolation of cDNA clones for human complement component C2.</title>
        <authorList>
            <person name="Bentley D.R."/>
            <person name="Porter R.R."/>
        </authorList>
    </citation>
    <scope>NUCLEOTIDE SEQUENCE [MRNA] OF 588-717 (ISOFORM 1)</scope>
</reference>
<reference key="15">
    <citation type="journal article" date="1987" name="Cell">
        <title>Cell-specific expression of the human complement protein factor B gene: evidence for the role of two distinct 5'-flanking elements.</title>
        <authorList>
            <person name="Wu L.C."/>
            <person name="Morley B.J."/>
            <person name="Campbell R.D."/>
        </authorList>
    </citation>
    <scope>NUCLEOTIDE SEQUENCE [GENOMIC DNA] OF 694-752</scope>
</reference>
<reference key="16">
    <citation type="journal article" date="1982" name="FEBS Lett.">
        <title>Human complement subcomponent C2: purification and proteolytic cleavage in fluid phase by C1s, C1r2-C1s2 and C1.</title>
        <authorList>
            <person name="Thielens N.M."/>
            <person name="Villiers M.B."/>
            <person name="Reboul A."/>
            <person name="Villiers C.L."/>
            <person name="Colomb M.G."/>
        </authorList>
    </citation>
    <scope>PROTEIN SEQUENCE OF N-TERMINUS</scope>
    <scope>PROTEOLYTIC CLEAVAGE</scope>
</reference>
<reference key="17">
    <citation type="journal article" date="1977" name="Proc. Natl. Acad. Sci. U.S.A.">
        <title>Cleavage of C2 by C1s into the antigenically distinct fragments C2a and C2b: demonstration of binding of C2b to C4b.</title>
        <authorList>
            <person name="Nagasawa S."/>
            <person name="Stroud R.M."/>
        </authorList>
    </citation>
    <scope>PROTEOLYTIC CLEAVAGE</scope>
</reference>
<reference key="18">
    <citation type="journal article" date="1978" name="Biochem. J.">
        <title>The purification and properties of the second component of human complement.</title>
        <authorList>
            <person name="Kerr M.A."/>
            <person name="Porter R.R."/>
        </authorList>
    </citation>
    <scope>PROTEOLYTIC CLEAVAGE</scope>
</reference>
<reference key="19">
    <citation type="journal article" date="1980" name="Biochem. J.">
        <title>The human complement system: assembly of the classical pathway C3 convertase.</title>
        <authorList>
            <person name="Kerr M.A."/>
        </authorList>
    </citation>
    <scope>FUNCTION</scope>
    <scope>CATALYTIC ACTIVITY</scope>
    <scope>SUBUNIT</scope>
    <scope>PROTEOLYTIC CLEAVAGE</scope>
</reference>
<reference key="20">
    <citation type="journal article" date="1983" name="J. Immunol.">
        <title>Surface modulation of classical pathway activation: C2 and C3 convertase formation and regulation on sheep, guinea pig, and human erythrocytes.</title>
        <authorList>
            <person name="Brown E.J."/>
            <person name="Ramsey J."/>
            <person name="Hammer C.H."/>
            <person name="Frank M.M."/>
        </authorList>
    </citation>
    <scope>SUBCELLULAR LOCATION</scope>
</reference>
<reference key="21">
    <citation type="journal article" date="1984" name="Biochem. J.">
        <title>The effects of iodine and thiol-blocking reagents on complement component C2 and on the assembly of the classical-pathway C3 convertase.</title>
        <authorList>
            <person name="Kerr M.A."/>
            <person name="Parkes C."/>
        </authorList>
    </citation>
    <scope>FUNCTION</scope>
    <scope>SUBUNIT</scope>
</reference>
<reference key="22">
    <citation type="journal article" date="1984" name="FEBS Lett.">
        <title>Comparative study of the fluid-phase proteolytic cleavage of human complement subcomponents C4 and C2 by C1s and C1r2-C1s2.</title>
        <authorList>
            <person name="Thielens N.M."/>
            <person name="Villiers C.L."/>
            <person name="Villiers M.B."/>
            <person name="Colomb M.G."/>
        </authorList>
    </citation>
    <scope>PROTEOLYTIC CLEAVAGE</scope>
</reference>
<reference key="23">
    <citation type="journal article" date="1985" name="J. Biochem.">
        <title>Purification and characterization of the C3 convertase of the classical pathway of human complement system by size exclusion high-performance liquid chromatography.</title>
        <authorList>
            <person name="Nagasawa S."/>
            <person name="Kobayashi C."/>
            <person name="Maki-Suzuki T."/>
            <person name="Yamashita N."/>
            <person name="Koyama J."/>
        </authorList>
    </citation>
    <scope>SUBUNIT</scope>
</reference>
<reference key="24">
    <citation type="journal article" date="1998" name="J. Biol. Chem.">
        <title>Baculovirus-mediated expression of truncated modular fragments from the catalytic region of human complement serine protease C1s. Evidence for the involvement of both complement control protein modules in the recognition of the C4 protein substrate.</title>
        <authorList>
            <person name="Rossi V."/>
            <person name="Bally I."/>
            <person name="Thielens N.M."/>
            <person name="Esser A.F."/>
            <person name="Arlaud G.J."/>
        </authorList>
    </citation>
    <scope>PROTEOLYTIC CLEAVAGE</scope>
</reference>
<reference key="25">
    <citation type="journal article" date="2001" name="J. Biol. Chem.">
        <title>Substrate specificities of recombinant mannan-binding lectin-associated serine proteases-1 and -2.</title>
        <authorList>
            <person name="Rossi V."/>
            <person name="Cseh S."/>
            <person name="Bally I."/>
            <person name="Thielens N.M."/>
            <person name="Jensenius J.C."/>
            <person name="Arlaud G.J."/>
        </authorList>
    </citation>
    <scope>PROTEOLYTIC CLEAVAGE</scope>
</reference>
<reference key="26">
    <citation type="journal article" date="2003" name="J. Biol. Chem.">
        <title>Formation of high affinity C5 convertase of the classical pathway of complement.</title>
        <authorList>
            <person name="Rawal N."/>
            <person name="Pangburn M.K."/>
        </authorList>
    </citation>
    <scope>FUNCTION</scope>
    <scope>CATALYTIC ACTIVITY</scope>
    <scope>SUBUNIT</scope>
</reference>
<reference key="27">
    <citation type="journal article" date="2003" name="J. Biol. Chem.">
        <title>A corresponding tyrosine residue in the C2/factor B type A domain is a hot spot in the decay acceleration of the complement C3 convertases.</title>
        <authorList>
            <person name="Kuttner-Kondo L.A."/>
            <person name="Dybvig M.P."/>
            <person name="Mitchell L.M."/>
            <person name="Muqim N."/>
            <person name="Atkinson J.P."/>
            <person name="Medof M.E."/>
            <person name="Hourcade D.E."/>
        </authorList>
    </citation>
    <scope>FUNCTION</scope>
    <scope>SUBUNIT</scope>
    <scope>MUTAGENESIS OF ASN-344; TYR-347 AND LEU-348</scope>
</reference>
<reference key="28">
    <citation type="journal article" date="2005" name="J. Biol. Chem.">
        <title>Elucidation of the substrate specificity of the C1s protease of the classical complement pathway.</title>
        <authorList>
            <person name="Kerr F.K."/>
            <person name="O'Brien G."/>
            <person name="Quinsey N.S."/>
            <person name="Whisstock J.C."/>
            <person name="Boyd S."/>
            <person name="de la Banda M.G."/>
            <person name="Kaiserman D."/>
            <person name="Matthews A.Y."/>
            <person name="Bird P.I."/>
            <person name="Pike R.N."/>
        </authorList>
    </citation>
    <scope>PROTEOLYTIC CLEAVAGE</scope>
</reference>
<reference key="29">
    <citation type="journal article" date="2005" name="J. Proteome Res.">
        <title>Human plasma N-glycoproteome analysis by immunoaffinity subtraction, hydrazide chemistry, and mass spectrometry.</title>
        <authorList>
            <person name="Liu T."/>
            <person name="Qian W.-J."/>
            <person name="Gritsenko M.A."/>
            <person name="Camp D.G. II"/>
            <person name="Monroe M.E."/>
            <person name="Moore R.J."/>
            <person name="Smith R.D."/>
        </authorList>
    </citation>
    <scope>GLYCOSYLATION [LARGE SCALE ANALYSIS] AT ASN-112; ASN-333; ASN-467; ASN-471; ASN-621 AND ASN-651</scope>
    <source>
        <tissue>Plasma</tissue>
    </source>
</reference>
<reference key="30">
    <citation type="journal article" date="2008" name="J. Biol. Chem.">
        <title>Activation of complement component C5: comparison of C5 convertases of the lectin pathway and the classical pathway of complement.</title>
        <authorList>
            <person name="Rawal N."/>
            <person name="Rajagopalan R."/>
            <person name="Salvi V.P."/>
        </authorList>
    </citation>
    <scope>FUNCTION</scope>
    <scope>CATALYTIC ACTIVITY</scope>
    <scope>SUBUNIT</scope>
</reference>
<reference key="31">
    <citation type="journal article" date="2009" name="J. Proteome Res.">
        <title>Glycoproteomics analysis of human liver tissue by combination of multiple enzyme digestion and hydrazide chemistry.</title>
        <authorList>
            <person name="Chen R."/>
            <person name="Jiang X."/>
            <person name="Sun D."/>
            <person name="Han G."/>
            <person name="Wang F."/>
            <person name="Ye M."/>
            <person name="Wang L."/>
            <person name="Zou H."/>
        </authorList>
    </citation>
    <scope>GLYCOSYLATION [LARGE SCALE ANALYSIS] AT ASN-112 AND ASN-333</scope>
    <source>
        <tissue>Liver</tissue>
    </source>
</reference>
<reference key="32">
    <citation type="journal article" date="2014" name="J. Proteomics">
        <title>An enzyme assisted RP-RPLC approach for in-depth analysis of human liver phosphoproteome.</title>
        <authorList>
            <person name="Bian Y."/>
            <person name="Song C."/>
            <person name="Cheng K."/>
            <person name="Dong M."/>
            <person name="Wang F."/>
            <person name="Huang J."/>
            <person name="Sun D."/>
            <person name="Wang L."/>
            <person name="Ye M."/>
            <person name="Zou H."/>
        </authorList>
    </citation>
    <scope>IDENTIFICATION BY MASS SPECTROMETRY [LARGE SCALE ANALYSIS]</scope>
    <source>
        <tissue>Liver</tissue>
    </source>
</reference>
<reference key="33">
    <citation type="journal article" date="2016" name="J. Biol. Chem.">
        <title>Solution Structures of Complement C2 and Its C4 Complexes Propose Pathway-specific mechanisms for control and activation of the complement proconvertases.</title>
        <authorList>
            <person name="Mortensen S."/>
            <person name="Jensen J.K."/>
            <person name="Andersen G.R."/>
        </authorList>
    </citation>
    <scope>SUBUNIT</scope>
    <scope>MUTAGENESIS OF CYS-261 AND GLN-263</scope>
</reference>
<reference key="34">
    <citation type="journal article" date="2025" name="Nature">
        <title>Granzyme K activates the entire complement cascade.</title>
        <authorList>
            <consortium name="Accelerating Medicines Partnership RA/SLE Network"/>
            <person name="Donado C.A."/>
            <person name="Theisen E."/>
            <person name="Zhang F."/>
            <person name="Nathan A."/>
            <person name="Fairfield M.L."/>
            <person name="Rupani K.V."/>
            <person name="Jones D."/>
            <person name="Johannes K.P."/>
            <person name="Raychaudhuri S."/>
            <person name="Dwyer D.F."/>
            <person name="Jonsson A.H."/>
            <person name="Brenner M.B."/>
        </authorList>
    </citation>
    <scope>FUNCTION</scope>
    <scope>PROTEOLYTIC CLEAVAGE</scope>
</reference>
<reference key="35">
    <citation type="journal article" date="2006" name="Structure">
        <title>Structure of complement component C2A: implications for convertase formation and substrate binding.</title>
        <authorList>
            <person name="Milder F.J."/>
            <person name="Raaijmakers H.C."/>
            <person name="Vandeputte M.D."/>
            <person name="Schouten A."/>
            <person name="Huizinga E.G."/>
            <person name="Romijn R.A."/>
            <person name="Hemrika W."/>
            <person name="Roos A."/>
            <person name="Daha M.R."/>
            <person name="Gros P."/>
        </authorList>
    </citation>
    <scope>X-RAY CRYSTALLOGRAPHY (2.1 ANGSTROMS) OF 244-752</scope>
    <scope>GLYCOSYLATION AT ASN-333; ASN-467 AND ASN-621</scope>
    <scope>FUNCTION</scope>
    <scope>CATALYTIC ACTIVITY</scope>
    <scope>MIDAS-LIKE MOTIF</scope>
    <scope>COFACTOR</scope>
    <scope>METAL-BINDING SITES</scope>
    <scope>ACTIVE SITE</scope>
    <scope>DISULFIDE BONDS</scope>
</reference>
<reference evidence="39" key="36">
    <citation type="journal article" date="2007" name="J. Mol. Biol.">
        <title>The crystal structure of C2a, the catalytic fragment of classical pathway C3 and C5 convertase of human complement.</title>
        <authorList>
            <person name="Krishnan V."/>
            <person name="Xu Y."/>
            <person name="Macon K."/>
            <person name="Volanakis J.E."/>
            <person name="Narayana S.V."/>
        </authorList>
    </citation>
    <scope>X-RAY CRYSTALLOGRAPHY (2.3 ANGSTROMS) OF 244-752</scope>
    <scope>DISULFIDE BONDS</scope>
    <scope>GLYCOSYLATION AT ASN-651</scope>
</reference>
<reference key="37">
    <citation type="journal article" date="2009" name="Acta Crystallogr. D">
        <title>The structure of C2b, a fragment of complement component C2 produced during C3 convertase formation.</title>
        <authorList>
            <person name="Krishnan V."/>
            <person name="Xu Y."/>
            <person name="Macon K."/>
            <person name="Volanakis J.E."/>
            <person name="Narayana S.V."/>
        </authorList>
    </citation>
    <scope>X-RAY CRYSTALLOGRAPHY (1.8 ANGSTROMS) OF 21-243</scope>
    <scope>DISULFIDE BONDS</scope>
</reference>
<reference key="38">
    <citation type="journal article" date="1996" name="J. Biol. Chem.">
        <title>Type II human complement C2 deficiency. Allele-specific amino acid substitutions (Ser189 --&gt; Phe; Gly444 --&gt; Arg) cause impaired C2 secretion.</title>
        <authorList>
            <person name="Wetsel R.A."/>
            <person name="Kulics J."/>
            <person name="Lokki M.L."/>
            <person name="Kiepiela P."/>
            <person name="Akama H."/>
            <person name="Johnson C.A."/>
            <person name="Densen P."/>
            <person name="Colten H.R."/>
        </authorList>
    </citation>
    <scope>VARIANTS C2D PHE-209 AND ARG-464</scope>
    <scope>SUBCELLULAR LOCATION</scope>
</reference>
<reference key="39">
    <citation type="journal article" date="1998" name="J. Immunol.">
        <title>A novel type II complement C2 deficiency allele in an African-American family.</title>
        <authorList>
            <person name="Zhu Z.B."/>
            <person name="Atkinson T.P."/>
            <person name="Volanakis J.E."/>
        </authorList>
    </citation>
    <scope>VARIANT C2D TYR-131</scope>
</reference>
<reference key="40">
    <citation type="journal article" date="2006" name="Nat. Genet.">
        <title>Variation in factor B (BF) and complement component 2 (C2) genes is associated with age-related macular degeneration.</title>
        <authorList>
            <person name="Gold B."/>
            <person name="Merriam J.E."/>
            <person name="Zernant J."/>
            <person name="Hancox L.S."/>
            <person name="Taiber A.J."/>
            <person name="Gehrs K."/>
            <person name="Cramer K."/>
            <person name="Neel J."/>
            <person name="Bergeron J."/>
            <person name="Barile G.R."/>
            <person name="Smith R.T."/>
            <person name="Hageman G.S."/>
            <person name="Dean M."/>
            <person name="Allikmets R."/>
        </authorList>
    </citation>
    <scope>VARIANT ASP-318</scope>
    <scope>INVOLVEMENT IN ARMD14</scope>
</reference>
<comment type="function">
    <text evidence="7 12 14 19">Precursor of the catalytic component of the C3 and C5 convertase complexes, which are part of the complement pathway, a cascade of proteins that leads to phagocytosis and breakdown of pathogens and signaling that strengthens the adaptive immune system (PubMed:12878586, PubMed:17027507, PubMed:18204047, PubMed:39914456). Component C2 is part of the classical, lectin and GZMK complement systems (PubMed:12878586, PubMed:17027507, PubMed:18204047, PubMed:39914456).</text>
</comment>
<comment type="function">
    <molecule>Serine protease complement C2b</molecule>
    <text evidence="7 8 12 14 24 25">Catalytic component of the complement C3 and C5 convertase complexes (PubMed:12878586, PubMed:17027507, PubMed:18204047, PubMed:6906228). Following complement activation, recruited to the surface of pathogens by complement C4b opsonin to form the C3 convertase, or C3b and C4b opsonins to form the C5 convertase (PubMed:6611150, PubMed:6906228). As part of the C3 convertase, cleaves and activate C3 into C3a anaphylatoxin and C3b opsonin, the next components of the complement pathways (PubMed:14561755, PubMed:17027507). As part of the C5 convertase, cleaves and activate C5 into C5a anaphylatoxin and C5b component of the membrane attack complex (PubMed:12878586, PubMed:17027507, PubMed:18204047).</text>
</comment>
<comment type="catalytic activity">
    <molecule>Serine protease complement C2b</molecule>
    <reaction evidence="7 8 12 14 25">
        <text>Selective cleavage of Arg-|-Ser bond in complement component C3 alpha-chain to form C3a and C3b, and Arg-|-Xaa bond in complement component C5 alpha-chain to form C5a and C5b.</text>
        <dbReference type="EC" id="3.4.21.43"/>
    </reaction>
</comment>
<comment type="cofactor">
    <cofactor evidence="13">
        <name>Mg(2+)</name>
        <dbReference type="ChEBI" id="CHEBI:18420"/>
    </cofactor>
    <cofactor evidence="12">
        <name>Mn(2+)</name>
        <dbReference type="ChEBI" id="CHEBI:29035"/>
    </cofactor>
</comment>
<comment type="subunit">
    <molecule>Serine protease complement C2b</molecule>
    <text evidence="7 8 14 17 18 24 25">Serine protease component of the C3 convertase, also named C4bC2b, composed of the serine protease complement C2b and complement C4b (PubMed:14561755, PubMed:27252379, PubMed:3874204, PubMed:6611150, PubMed:6906228). Serine protease component of the C5 convertase, also named C4bC2bC3b, composed of the serine protease complement C2b, complement C3b, as well as complement C4b (PubMed:12878586, PubMed:18204047).</text>
</comment>
<comment type="subunit">
    <molecule>Serine protease complement C2b</molecule>
    <text evidence="5">(Microbial infection) Interacts with Schistosoma haematobium TOR (via N-terminal extracellular domain). This results in inhibition of the classical and lectin pathway of complement activation, probably due to interference with binding of C2a to C4b such that C3 convertase cannot be formed. This infers resistance to complement-mediated cell lysis, allowing parasite survival and infection.</text>
</comment>
<comment type="interaction">
    <interactant intactId="EBI-2835920">
        <id>P06681</id>
    </interactant>
    <interactant intactId="EBI-2810045">
        <id>P09871</id>
        <label>C1S</label>
    </interactant>
    <organismsDiffer>false</organismsDiffer>
    <experiments>3</experiments>
</comment>
<comment type="interaction">
    <interactant intactId="EBI-2835920">
        <id>P06681</id>
    </interactant>
    <interactant intactId="EBI-625022">
        <id>O43889-2</id>
        <label>CREB3</label>
    </interactant>
    <organismsDiffer>false</organismsDiffer>
    <experiments>3</experiments>
</comment>
<comment type="interaction">
    <interactant intactId="EBI-2835920">
        <id>P06681</id>
    </interactant>
    <interactant intactId="EBI-3915253">
        <id>Q15125</id>
        <label>EBP</label>
    </interactant>
    <organismsDiffer>false</organismsDiffer>
    <experiments>3</experiments>
</comment>
<comment type="interaction">
    <interactant intactId="EBI-2835920">
        <id>P06681</id>
    </interactant>
    <interactant intactId="EBI-781551">
        <id>Q9Y282</id>
        <label>ERGIC3</label>
    </interactant>
    <organismsDiffer>false</organismsDiffer>
    <experiments>3</experiments>
</comment>
<comment type="interaction">
    <interactant intactId="EBI-2835920">
        <id>P06681</id>
    </interactant>
    <interactant intactId="EBI-18304435">
        <id>Q5JX71</id>
        <label>FAM209A</label>
    </interactant>
    <organismsDiffer>false</organismsDiffer>
    <experiments>3</experiments>
</comment>
<comment type="interaction">
    <interactant intactId="EBI-2835920">
        <id>P06681</id>
    </interactant>
    <interactant intactId="EBI-17263240">
        <id>P15941-11</id>
        <label>MUC1</label>
    </interactant>
    <organismsDiffer>false</organismsDiffer>
    <experiments>3</experiments>
</comment>
<comment type="interaction">
    <interactant intactId="EBI-2835920">
        <id>P06681</id>
    </interactant>
    <interactant intactId="EBI-2855401">
        <id>Q9BY50</id>
        <label>SEC11C</label>
    </interactant>
    <organismsDiffer>false</organismsDiffer>
    <experiments>5</experiments>
</comment>
<comment type="interaction">
    <interactant intactId="EBI-2835920">
        <id>P06681</id>
    </interactant>
    <interactant intactId="EBI-3923031">
        <id>Q14973</id>
        <label>SLC10A1</label>
    </interactant>
    <organismsDiffer>false</organismsDiffer>
    <experiments>3</experiments>
</comment>
<comment type="interaction">
    <interactant intactId="EBI-2835920">
        <id>P06681</id>
    </interactant>
    <interactant intactId="EBI-17295964">
        <id>Q9NQQ7-3</id>
        <label>SLC35C2</label>
    </interactant>
    <organismsDiffer>false</organismsDiffer>
    <experiments>3</experiments>
</comment>
<comment type="interaction">
    <interactant intactId="EBI-2835920">
        <id>P06681</id>
    </interactant>
    <interactant intactId="EBI-1211440">
        <id>P27105</id>
        <label>STOM</label>
    </interactant>
    <organismsDiffer>false</organismsDiffer>
    <experiments>3</experiments>
</comment>
<comment type="subcellular location">
    <subcellularLocation>
        <location evidence="28">Secreted</location>
    </subcellularLocation>
    <subcellularLocation>
        <location evidence="23">Cell surface</location>
    </subcellularLocation>
    <text evidence="23">Recruited to the surface of pathogens by complement C3b and complement C4b opsonins.</text>
</comment>
<comment type="alternative products">
    <event type="alternative splicing"/>
    <isoform>
        <id>P06681-1</id>
        <name>1</name>
        <sequence type="displayed"/>
    </isoform>
    <isoform>
        <id>P06681-2</id>
        <name>2</name>
        <sequence type="described" ref="VSP_043038 VSP_043039"/>
    </isoform>
    <isoform>
        <id>P06681-3</id>
        <name>3</name>
        <sequence type="described" ref="VSP_046103"/>
    </isoform>
</comment>
<comment type="domain">
    <text evidence="12">The MIDAS-like motif in the VWFA domain binds divalent metal cations.</text>
</comment>
<comment type="PTM">
    <text evidence="6 9 19 20 21 22 25 27 29">Cleaved and activated by different proteases depending on the complement pathway to generate complement C2a and serine protease complement C2b chains (PubMed:6282646, PubMed:6319179, PubMed:6906228, PubMed:70787). Cleaved and activated by C1S following activation by the classical complement system (PubMed:11527969, PubMed:16169853, PubMed:417728, PubMed:6282646, PubMed:6319179, PubMed:6906228, PubMed:70787, PubMed:9422791). Cleaved and activated by MASP2 following activation by the lectin complement system (PubMed:11527969). Cleaved and activated by GZMK following activation by the GZMK complement system (PubMed:39914456).</text>
</comment>
<comment type="disease" evidence="11">
    <disease id="DI-03919">
        <name>Macular degeneration, age-related, 14</name>
        <acronym>ARMD14</acronym>
        <description>A form of age-related macular degeneration, a multifactorial eye disease and the most common cause of irreversible vision loss in the developed world. In most patients, the disease is manifest as ophthalmoscopically visible yellowish accumulations of protein and lipid that lie beneath the retinal pigment epithelium and within an elastin-containing structure known as Bruch membrane.</description>
        <dbReference type="MIM" id="615489"/>
    </disease>
    <text evidence="11">Disease susceptibility may be associated with variants affecting the gene represented in this entry. Haplotype analyzes have identified a statistically significant common risk haplotype and two protective haplotypes. CFB variant His-9 and C2 variant Asp-318, as well as CFB variant Gln-32 and a variant in intron 10 of C2, confer a significantly reduced risk of AMD.</text>
</comment>
<comment type="disease" evidence="28 30">
    <disease id="DI-01306">
        <name>Complement component 2 deficiency</name>
        <acronym>C2D</acronym>
        <description>A rare defect of the complement classical pathway associated with the development of autoimmune disorders, mainly systemic lupus erythematosus. Skin and joint manifestations are common and renal disease is relatively rare. Patients with complement component 2 deficiency are also reported to have recurrent invasive infections.</description>
        <dbReference type="MIM" id="217000"/>
    </disease>
    <text>The disease is caused by variants affecting the gene represented in this entry.</text>
</comment>
<comment type="miscellaneous">
    <text>C2 is a major histocompatibility complex class-III protein.</text>
</comment>
<comment type="similarity">
    <text evidence="3">Belongs to the peptidase S1 family.</text>
</comment>
<comment type="caution">
    <text evidence="34">Historically, the serine protease complement C2b, which constitutes the larger catalytic fragment, was named C2a. It was later renamed C2b, a nomenclature widely accepted now.</text>
</comment>
<comment type="online information" name="C2base">
    <link uri="https://databases.lovd.nl/shared/genes/C2"/>
    <text>C2 mutation db</text>
</comment>
<proteinExistence type="evidence at protein level"/>